<comment type="function">
    <text evidence="1">General inhibitor of family S1 serine proteases.</text>
</comment>
<comment type="subunit">
    <text evidence="1">Homodimer.</text>
</comment>
<comment type="subcellular location">
    <subcellularLocation>
        <location evidence="1">Periplasm</location>
    </subcellularLocation>
</comment>
<comment type="similarity">
    <text evidence="1">Belongs to the protease inhibitor I11 (ecotin) family.</text>
</comment>
<feature type="signal peptide" evidence="1">
    <location>
        <begin position="1"/>
        <end position="22"/>
    </location>
</feature>
<feature type="chain" id="PRO_5000305799" description="Ecotin">
    <location>
        <begin position="23"/>
        <end position="159"/>
    </location>
</feature>
<feature type="site" description="Reactive bond" evidence="1">
    <location>
        <begin position="102"/>
        <end position="103"/>
    </location>
</feature>
<feature type="disulfide bond" evidence="1">
    <location>
        <begin position="68"/>
        <end position="105"/>
    </location>
</feature>
<reference key="1">
    <citation type="submission" date="2008-01" db="EMBL/GenBank/DDBJ databases">
        <title>Complete sequence of Pseudomonas putida GB-1.</title>
        <authorList>
            <consortium name="US DOE Joint Genome Institute"/>
            <person name="Copeland A."/>
            <person name="Lucas S."/>
            <person name="Lapidus A."/>
            <person name="Barry K."/>
            <person name="Glavina del Rio T."/>
            <person name="Dalin E."/>
            <person name="Tice H."/>
            <person name="Pitluck S."/>
            <person name="Bruce D."/>
            <person name="Goodwin L."/>
            <person name="Chertkov O."/>
            <person name="Brettin T."/>
            <person name="Detter J.C."/>
            <person name="Han C."/>
            <person name="Kuske C.R."/>
            <person name="Schmutz J."/>
            <person name="Larimer F."/>
            <person name="Land M."/>
            <person name="Hauser L."/>
            <person name="Kyrpides N."/>
            <person name="Kim E."/>
            <person name="McCarthy J.K."/>
            <person name="Richardson P."/>
        </authorList>
    </citation>
    <scope>NUCLEOTIDE SEQUENCE [LARGE SCALE GENOMIC DNA]</scope>
    <source>
        <strain>GB-1</strain>
    </source>
</reference>
<evidence type="ECO:0000255" key="1">
    <source>
        <dbReference type="HAMAP-Rule" id="MF_00706"/>
    </source>
</evidence>
<accession>B0KU25</accession>
<gene>
    <name evidence="1" type="primary">eco</name>
    <name type="ordered locus">PputGB1_2794</name>
</gene>
<protein>
    <recommendedName>
        <fullName evidence="1">Ecotin</fullName>
    </recommendedName>
</protein>
<proteinExistence type="inferred from homology"/>
<name>ECOT_PSEPG</name>
<keyword id="KW-1015">Disulfide bond</keyword>
<keyword id="KW-0574">Periplasm</keyword>
<keyword id="KW-0646">Protease inhibitor</keyword>
<keyword id="KW-0722">Serine protease inhibitor</keyword>
<keyword id="KW-0732">Signal</keyword>
<sequence length="159" mass="17432">MRPTPMTAILALTLAAAAPAMAASLKDVAPYPEAEKGFTRQVIHLPAQADESAYKLEILAGKTLKVDCNRQRLGGSLEERTLEGWGYNYYRLDKVSGPASTLMACPDGKKTEAFVPVVGDGFLLRYNSKLPVVVYVPKDVEVRYRVWSASQDVQKANVE</sequence>
<organism>
    <name type="scientific">Pseudomonas putida (strain GB-1)</name>
    <dbReference type="NCBI Taxonomy" id="76869"/>
    <lineage>
        <taxon>Bacteria</taxon>
        <taxon>Pseudomonadati</taxon>
        <taxon>Pseudomonadota</taxon>
        <taxon>Gammaproteobacteria</taxon>
        <taxon>Pseudomonadales</taxon>
        <taxon>Pseudomonadaceae</taxon>
        <taxon>Pseudomonas</taxon>
    </lineage>
</organism>
<dbReference type="EMBL" id="CP000926">
    <property type="protein sequence ID" value="ABY98688.1"/>
    <property type="molecule type" value="Genomic_DNA"/>
</dbReference>
<dbReference type="RefSeq" id="WP_012272426.1">
    <property type="nucleotide sequence ID" value="NC_010322.1"/>
</dbReference>
<dbReference type="SMR" id="B0KU25"/>
<dbReference type="MEROPS" id="I11.003"/>
<dbReference type="KEGG" id="ppg:PputGB1_2794"/>
<dbReference type="eggNOG" id="COG4574">
    <property type="taxonomic scope" value="Bacteria"/>
</dbReference>
<dbReference type="HOGENOM" id="CLU_111565_0_0_6"/>
<dbReference type="Proteomes" id="UP000002157">
    <property type="component" value="Chromosome"/>
</dbReference>
<dbReference type="GO" id="GO:0042597">
    <property type="term" value="C:periplasmic space"/>
    <property type="evidence" value="ECO:0007669"/>
    <property type="project" value="UniProtKB-SubCell"/>
</dbReference>
<dbReference type="GO" id="GO:0004867">
    <property type="term" value="F:serine-type endopeptidase inhibitor activity"/>
    <property type="evidence" value="ECO:0007669"/>
    <property type="project" value="UniProtKB-UniRule"/>
</dbReference>
<dbReference type="CDD" id="cd00242">
    <property type="entry name" value="Ecotin"/>
    <property type="match status" value="1"/>
</dbReference>
<dbReference type="Gene3D" id="2.60.40.550">
    <property type="entry name" value="Ecotin"/>
    <property type="match status" value="1"/>
</dbReference>
<dbReference type="Gene3D" id="4.10.1230.10">
    <property type="entry name" value="Ecotin, trypsin inhibitor"/>
    <property type="match status" value="1"/>
</dbReference>
<dbReference type="HAMAP" id="MF_00706">
    <property type="entry name" value="Ecotin"/>
    <property type="match status" value="1"/>
</dbReference>
<dbReference type="InterPro" id="IPR027438">
    <property type="entry name" value="Ecotin_C"/>
</dbReference>
<dbReference type="InterPro" id="IPR036198">
    <property type="entry name" value="Ecotin_sf"/>
</dbReference>
<dbReference type="InterPro" id="IPR005658">
    <property type="entry name" value="Prot_inh_ecotin"/>
</dbReference>
<dbReference type="InterPro" id="IPR023084">
    <property type="entry name" value="Prot_inh_ecotin_gammaproteobac"/>
</dbReference>
<dbReference type="NCBIfam" id="NF002987">
    <property type="entry name" value="PRK03719.1"/>
    <property type="match status" value="1"/>
</dbReference>
<dbReference type="PANTHER" id="PTHR35890">
    <property type="match status" value="1"/>
</dbReference>
<dbReference type="PANTHER" id="PTHR35890:SF3">
    <property type="entry name" value="ECOTIN"/>
    <property type="match status" value="1"/>
</dbReference>
<dbReference type="Pfam" id="PF03974">
    <property type="entry name" value="Ecotin"/>
    <property type="match status" value="1"/>
</dbReference>
<dbReference type="PIRSF" id="PIRSF006865">
    <property type="entry name" value="Prot_inh_ecotin"/>
    <property type="match status" value="1"/>
</dbReference>
<dbReference type="SUPFAM" id="SSF49772">
    <property type="entry name" value="Ecotin, trypsin inhibitor"/>
    <property type="match status" value="1"/>
</dbReference>